<gene>
    <name type="primary">ycaR</name>
    <name type="ordered locus">b0917</name>
    <name type="ordered locus">JW0900</name>
</gene>
<reference key="1">
    <citation type="journal article" date="1996" name="DNA Res.">
        <title>A 718-kb DNA sequence of the Escherichia coli K-12 genome corresponding to the 12.7-28.0 min region on the linkage map.</title>
        <authorList>
            <person name="Oshima T."/>
            <person name="Aiba H."/>
            <person name="Baba T."/>
            <person name="Fujita K."/>
            <person name="Hayashi K."/>
            <person name="Honjo A."/>
            <person name="Ikemoto K."/>
            <person name="Inada T."/>
            <person name="Itoh T."/>
            <person name="Kajihara M."/>
            <person name="Kanai K."/>
            <person name="Kashimoto K."/>
            <person name="Kimura S."/>
            <person name="Kitagawa M."/>
            <person name="Makino K."/>
            <person name="Masuda S."/>
            <person name="Miki T."/>
            <person name="Mizobuchi K."/>
            <person name="Mori H."/>
            <person name="Motomura K."/>
            <person name="Nakamura Y."/>
            <person name="Nashimoto H."/>
            <person name="Nishio Y."/>
            <person name="Saito N."/>
            <person name="Sampei G."/>
            <person name="Seki Y."/>
            <person name="Tagami H."/>
            <person name="Takemoto K."/>
            <person name="Wada C."/>
            <person name="Yamamoto Y."/>
            <person name="Yano M."/>
            <person name="Horiuchi T."/>
        </authorList>
    </citation>
    <scope>NUCLEOTIDE SEQUENCE [LARGE SCALE GENOMIC DNA]</scope>
    <source>
        <strain>K12 / W3110 / ATCC 27325 / DSM 5911</strain>
    </source>
</reference>
<reference key="2">
    <citation type="journal article" date="1997" name="Science">
        <title>The complete genome sequence of Escherichia coli K-12.</title>
        <authorList>
            <person name="Blattner F.R."/>
            <person name="Plunkett G. III"/>
            <person name="Bloch C.A."/>
            <person name="Perna N.T."/>
            <person name="Burland V."/>
            <person name="Riley M."/>
            <person name="Collado-Vides J."/>
            <person name="Glasner J.D."/>
            <person name="Rode C.K."/>
            <person name="Mayhew G.F."/>
            <person name="Gregor J."/>
            <person name="Davis N.W."/>
            <person name="Kirkpatrick H.A."/>
            <person name="Goeden M.A."/>
            <person name="Rose D.J."/>
            <person name="Mau B."/>
            <person name="Shao Y."/>
        </authorList>
    </citation>
    <scope>NUCLEOTIDE SEQUENCE [LARGE SCALE GENOMIC DNA]</scope>
    <source>
        <strain>K12 / MG1655 / ATCC 47076</strain>
    </source>
</reference>
<reference key="3">
    <citation type="journal article" date="2006" name="Mol. Syst. Biol.">
        <title>Highly accurate genome sequences of Escherichia coli K-12 strains MG1655 and W3110.</title>
        <authorList>
            <person name="Hayashi K."/>
            <person name="Morooka N."/>
            <person name="Yamamoto Y."/>
            <person name="Fujita K."/>
            <person name="Isono K."/>
            <person name="Choi S."/>
            <person name="Ohtsubo E."/>
            <person name="Baba T."/>
            <person name="Wanner B.L."/>
            <person name="Mori H."/>
            <person name="Horiuchi T."/>
        </authorList>
    </citation>
    <scope>NUCLEOTIDE SEQUENCE [LARGE SCALE GENOMIC DNA]</scope>
    <source>
        <strain>K12 / W3110 / ATCC 27325 / DSM 5911</strain>
    </source>
</reference>
<reference key="4">
    <citation type="journal article" date="1999" name="Electrophoresis">
        <title>Enrichment of low abundance proteins of Escherichia coli by hydroxyapatite chromatography.</title>
        <authorList>
            <person name="Fountoulakis M."/>
            <person name="Takacs M.-F."/>
            <person name="Berndt P."/>
            <person name="Langen H."/>
            <person name="Takacs B."/>
        </authorList>
    </citation>
    <scope>IDENTIFICATION BY MASS SPECTROMETRY</scope>
    <source>
        <strain>B / BL21</strain>
    </source>
</reference>
<keyword id="KW-1185">Reference proteome</keyword>
<proteinExistence type="evidence at protein level"/>
<feature type="chain" id="PRO_0000168762" description="UPF0434 protein YcaR">
    <location>
        <begin position="1"/>
        <end position="60"/>
    </location>
</feature>
<evidence type="ECO:0000305" key="1"/>
<protein>
    <recommendedName>
        <fullName>UPF0434 protein YcaR</fullName>
    </recommendedName>
</protein>
<sequence>MDHRLLEIIACPVCNGKLWYNQEKQELICKLDNLAFPLRDGIPVLLETEARVLTADESKS</sequence>
<dbReference type="EMBL" id="U00096">
    <property type="protein sequence ID" value="AAC74003.1"/>
    <property type="molecule type" value="Genomic_DNA"/>
</dbReference>
<dbReference type="EMBL" id="AP009048">
    <property type="protein sequence ID" value="BAA35663.1"/>
    <property type="molecule type" value="Genomic_DNA"/>
</dbReference>
<dbReference type="PIR" id="D64831">
    <property type="entry name" value="D64831"/>
</dbReference>
<dbReference type="RefSeq" id="NP_415437.1">
    <property type="nucleotide sequence ID" value="NC_000913.3"/>
</dbReference>
<dbReference type="RefSeq" id="WP_000350058.1">
    <property type="nucleotide sequence ID" value="NZ_STEB01000006.1"/>
</dbReference>
<dbReference type="SMR" id="P0AAZ7"/>
<dbReference type="BioGRID" id="4262081">
    <property type="interactions" value="293"/>
</dbReference>
<dbReference type="FunCoup" id="P0AAZ7">
    <property type="interactions" value="212"/>
</dbReference>
<dbReference type="IntAct" id="P0AAZ7">
    <property type="interactions" value="2"/>
</dbReference>
<dbReference type="STRING" id="511145.b0917"/>
<dbReference type="jPOST" id="P0AAZ7"/>
<dbReference type="PaxDb" id="511145-b0917"/>
<dbReference type="EnsemblBacteria" id="AAC74003">
    <property type="protein sequence ID" value="AAC74003"/>
    <property type="gene ID" value="b0917"/>
</dbReference>
<dbReference type="GeneID" id="93776498"/>
<dbReference type="GeneID" id="945537"/>
<dbReference type="KEGG" id="ecj:JW0900"/>
<dbReference type="KEGG" id="eco:b0917"/>
<dbReference type="KEGG" id="ecoc:C3026_05645"/>
<dbReference type="PATRIC" id="fig|1411691.4.peg.1359"/>
<dbReference type="EchoBASE" id="EB4035"/>
<dbReference type="eggNOG" id="COG2835">
    <property type="taxonomic scope" value="Bacteria"/>
</dbReference>
<dbReference type="HOGENOM" id="CLU_155659_3_1_6"/>
<dbReference type="InParanoid" id="P0AAZ7"/>
<dbReference type="OMA" id="ELICHAD"/>
<dbReference type="OrthoDB" id="9812205at2"/>
<dbReference type="PhylomeDB" id="P0AAZ7"/>
<dbReference type="BioCyc" id="EcoCyc:G6472-MONOMER"/>
<dbReference type="PRO" id="PR:P0AAZ7"/>
<dbReference type="Proteomes" id="UP000000625">
    <property type="component" value="Chromosome"/>
</dbReference>
<dbReference type="GO" id="GO:0005829">
    <property type="term" value="C:cytosol"/>
    <property type="evidence" value="ECO:0000314"/>
    <property type="project" value="EcoCyc"/>
</dbReference>
<dbReference type="FunFam" id="2.20.25.10:FF:000002">
    <property type="entry name" value="UPF0434 protein YcaR"/>
    <property type="match status" value="1"/>
</dbReference>
<dbReference type="Gene3D" id="2.20.25.10">
    <property type="match status" value="1"/>
</dbReference>
<dbReference type="HAMAP" id="MF_01187">
    <property type="entry name" value="UPF0434"/>
    <property type="match status" value="1"/>
</dbReference>
<dbReference type="InterPro" id="IPR005651">
    <property type="entry name" value="Trm112-like"/>
</dbReference>
<dbReference type="NCBIfam" id="NF008806">
    <property type="entry name" value="PRK11827.1"/>
    <property type="match status" value="1"/>
</dbReference>
<dbReference type="PANTHER" id="PTHR33505:SF4">
    <property type="entry name" value="PROTEIN PREY, MITOCHONDRIAL"/>
    <property type="match status" value="1"/>
</dbReference>
<dbReference type="PANTHER" id="PTHR33505">
    <property type="entry name" value="ZGC:162634"/>
    <property type="match status" value="1"/>
</dbReference>
<dbReference type="Pfam" id="PF03966">
    <property type="entry name" value="Trm112p"/>
    <property type="match status" value="1"/>
</dbReference>
<dbReference type="SUPFAM" id="SSF158997">
    <property type="entry name" value="Trm112p-like"/>
    <property type="match status" value="1"/>
</dbReference>
<organism>
    <name type="scientific">Escherichia coli (strain K12)</name>
    <dbReference type="NCBI Taxonomy" id="83333"/>
    <lineage>
        <taxon>Bacteria</taxon>
        <taxon>Pseudomonadati</taxon>
        <taxon>Pseudomonadota</taxon>
        <taxon>Gammaproteobacteria</taxon>
        <taxon>Enterobacterales</taxon>
        <taxon>Enterobacteriaceae</taxon>
        <taxon>Escherichia</taxon>
    </lineage>
</organism>
<name>YCAR_ECOLI</name>
<comment type="similarity">
    <text evidence="1">Belongs to the UPF0434 family.</text>
</comment>
<accession>P0AAZ7</accession>
<accession>P75844</accession>